<reference key="1">
    <citation type="submission" date="2005-08" db="EMBL/GenBank/DDBJ databases">
        <title>The NIAID influenza genome sequencing project.</title>
        <authorList>
            <person name="Ghedin E."/>
            <person name="Spiro D."/>
            <person name="Miller N."/>
            <person name="Zaborsky J."/>
            <person name="Feldblyum T."/>
            <person name="Subbu V."/>
            <person name="Shumway M."/>
            <person name="Sparenborg J."/>
            <person name="Groveman L."/>
            <person name="Halpin R."/>
            <person name="Sitz J."/>
            <person name="Koo H."/>
            <person name="Salzberg S.L."/>
            <person name="Webster R.G."/>
            <person name="Hoffmann E."/>
            <person name="Krauss S."/>
            <person name="Naeve C."/>
            <person name="Bao Y."/>
            <person name="Bolotov P."/>
            <person name="Dernovoy D."/>
            <person name="Kiryutin B."/>
            <person name="Lipman D.J."/>
            <person name="Tatusova T."/>
        </authorList>
    </citation>
    <scope>NUCLEOTIDE SEQUENCE [GENOMIC RNA]</scope>
</reference>
<proteinExistence type="inferred from homology"/>
<organismHost>
    <name type="scientific">Aves</name>
    <dbReference type="NCBI Taxonomy" id="8782"/>
</organismHost>
<organismHost>
    <name type="scientific">Cetacea</name>
    <name type="common">whales</name>
    <dbReference type="NCBI Taxonomy" id="9721"/>
</organismHost>
<organismHost>
    <name type="scientific">Homo sapiens</name>
    <name type="common">Human</name>
    <dbReference type="NCBI Taxonomy" id="9606"/>
</organismHost>
<organismHost>
    <name type="scientific">Phocidae</name>
    <name type="common">true seals</name>
    <dbReference type="NCBI Taxonomy" id="9709"/>
</organismHost>
<organismHost>
    <name type="scientific">Sus scrofa</name>
    <name type="common">Pig</name>
    <dbReference type="NCBI Taxonomy" id="9823"/>
</organismHost>
<protein>
    <recommendedName>
        <fullName evidence="1">Nuclear export protein</fullName>
        <shortName evidence="1">NEP</shortName>
    </recommendedName>
    <alternativeName>
        <fullName evidence="1">Non-structural protein 2</fullName>
        <shortName evidence="1">NS2</shortName>
    </alternativeName>
</protein>
<keyword id="KW-0025">Alternative splicing</keyword>
<keyword id="KW-1048">Host nucleus</keyword>
<keyword id="KW-0945">Host-virus interaction</keyword>
<keyword id="KW-0813">Transport</keyword>
<keyword id="KW-0946">Virion</keyword>
<dbReference type="EMBL" id="CY002100">
    <property type="protein sequence ID" value="AAZ43389.1"/>
    <property type="molecule type" value="Genomic_RNA"/>
</dbReference>
<dbReference type="SMR" id="Q463X0"/>
<dbReference type="Proteomes" id="UP000118421">
    <property type="component" value="Genome"/>
</dbReference>
<dbReference type="GO" id="GO:0042025">
    <property type="term" value="C:host cell nucleus"/>
    <property type="evidence" value="ECO:0007669"/>
    <property type="project" value="UniProtKB-SubCell"/>
</dbReference>
<dbReference type="GO" id="GO:0044423">
    <property type="term" value="C:virion component"/>
    <property type="evidence" value="ECO:0007669"/>
    <property type="project" value="UniProtKB-UniRule"/>
</dbReference>
<dbReference type="GO" id="GO:0039675">
    <property type="term" value="P:exit of virus from host cell nucleus through nuclear pore"/>
    <property type="evidence" value="ECO:0007669"/>
    <property type="project" value="UniProtKB-UniRule"/>
</dbReference>
<dbReference type="Gene3D" id="1.10.287.230">
    <property type="match status" value="1"/>
</dbReference>
<dbReference type="Gene3D" id="1.10.287.10">
    <property type="entry name" value="S15/NS1, RNA-binding"/>
    <property type="match status" value="1"/>
</dbReference>
<dbReference type="HAMAP" id="MF_04067">
    <property type="entry name" value="INFV_NEP"/>
    <property type="match status" value="1"/>
</dbReference>
<dbReference type="InterPro" id="IPR000968">
    <property type="entry name" value="Flu_NS2"/>
</dbReference>
<dbReference type="Pfam" id="PF00601">
    <property type="entry name" value="Flu_NS2"/>
    <property type="match status" value="1"/>
</dbReference>
<dbReference type="SUPFAM" id="SSF101156">
    <property type="entry name" value="Nonstructural protein ns2, Nep, M1-binding domain"/>
    <property type="match status" value="1"/>
</dbReference>
<evidence type="ECO:0000255" key="1">
    <source>
        <dbReference type="HAMAP-Rule" id="MF_04067"/>
    </source>
</evidence>
<gene>
    <name evidence="1" type="primary">NS</name>
</gene>
<comment type="function">
    <text evidence="1">Mediates the nuclear export of encapsidated genomic RNAs (ribonucleoproteins, RNPs). Acts as an adapter between viral RNPs complexes and the nuclear export machinery of the cell. Possesses no intrinsic RNA-binding activity, but includes a C-terminal M1-binding domain. This domain is believed to allow recognition of RNPs bound to the protein M1. Since protein M1 is not available in large quantities before late stages of infection, such an indirect recognition mechanism probably ensures that genomic RNPs are not exported from the host nucleus until sufficient quantities of viral mRNA and progeny genomic RNA have been synthesized. Furthermore, the RNPs enter the host cytoplasm only when associated with the M1 protein that is necessary to guide them to the plasma membrane. May down-regulate viral RNA synthesis when overproduced.</text>
</comment>
<comment type="subunit">
    <text evidence="1">Interacts with protein M1. May interact with host nucleoporin RAB/HRB and exportin XPO1/CRM1.</text>
</comment>
<comment type="subcellular location">
    <subcellularLocation>
        <location evidence="1">Virion</location>
    </subcellularLocation>
    <subcellularLocation>
        <location evidence="1">Host nucleus</location>
    </subcellularLocation>
</comment>
<comment type="alternative products">
    <event type="alternative splicing"/>
    <isoform>
        <id>Q463X0-1</id>
        <name>NEP</name>
        <name>NS2</name>
        <sequence type="displayed"/>
    </isoform>
    <isoform>
        <id>Q463W9-1</id>
        <name>NS1</name>
        <sequence type="external"/>
    </isoform>
</comment>
<comment type="similarity">
    <text evidence="1">Belongs to the influenza viruses NEP family.</text>
</comment>
<name>NEP_I72A3</name>
<organism>
    <name type="scientific">Influenza A virus (strain A/Memphis/102/1972 H3N2)</name>
    <dbReference type="NCBI Taxonomy" id="385640"/>
    <lineage>
        <taxon>Viruses</taxon>
        <taxon>Riboviria</taxon>
        <taxon>Orthornavirae</taxon>
        <taxon>Negarnaviricota</taxon>
        <taxon>Polyploviricotina</taxon>
        <taxon>Insthoviricetes</taxon>
        <taxon>Articulavirales</taxon>
        <taxon>Orthomyxoviridae</taxon>
        <taxon>Alphainfluenzavirus</taxon>
        <taxon>Alphainfluenzavirus influenzae</taxon>
        <taxon>Influenza A virus</taxon>
    </lineage>
</organism>
<feature type="chain" id="PRO_0000324207" description="Nuclear export protein">
    <location>
        <begin position="1"/>
        <end position="121"/>
    </location>
</feature>
<feature type="short sequence motif" description="Nuclear export signal" evidence="1">
    <location>
        <begin position="12"/>
        <end position="21"/>
    </location>
</feature>
<feature type="short sequence motif" description="Nuclear export signal" evidence="1">
    <location>
        <begin position="85"/>
        <end position="94"/>
    </location>
</feature>
<accession>Q463X0</accession>
<sequence>MDSNTVSSFQDILLRMSKMQLGSSSEDLNGMITQFESLKLYRDSLGEAVMRMGDLHLLQNRNGKWREQLGQKFEEIRWLIEEVRHRLKTTENSFEQITFMQALQLLFEVEQEIRTFSFQLI</sequence>